<reference key="1">
    <citation type="submission" date="2003-07" db="EMBL/GenBank/DDBJ databases">
        <title>Cloning and characterization of a novel human cDNA homology to chicken thymocyte protein cThy28kD mRNA.</title>
        <authorList>
            <person name="Ge H.P."/>
            <person name="Yu L."/>
            <person name="Cui W.C."/>
            <person name="Fan Y.X."/>
            <person name="Yang Y.M."/>
            <person name="Zhao S.Y."/>
        </authorList>
    </citation>
    <scope>NUCLEOTIDE SEQUENCE [MRNA] (ISOFORM 1)</scope>
</reference>
<reference key="2">
    <citation type="submission" date="1998-04" db="EMBL/GenBank/DDBJ databases">
        <authorList>
            <person name="Mao Y.M."/>
            <person name="Xie Y."/>
            <person name="Zhou Z.X."/>
        </authorList>
    </citation>
    <scope>NUCLEOTIDE SEQUENCE [LARGE SCALE MRNA] (ISOFORM 1)</scope>
    <source>
        <tissue>Fetal brain</tissue>
    </source>
</reference>
<reference key="3">
    <citation type="submission" date="1999-09" db="EMBL/GenBank/DDBJ databases">
        <title>Novel genes expressed in hematopoietic stem/progenitor cells from myelodysplastic syndrome patients.</title>
        <authorList>
            <person name="Huang C."/>
            <person name="Qian B."/>
            <person name="Tu Y."/>
            <person name="Gu W."/>
            <person name="Wang Y."/>
            <person name="Han Z."/>
            <person name="Chen Z."/>
        </authorList>
    </citation>
    <scope>NUCLEOTIDE SEQUENCE [LARGE SCALE MRNA] (ISOFORM 2)</scope>
</reference>
<reference key="4">
    <citation type="journal article" date="2000" name="Genome Res.">
        <title>Cloning and functional analysis of cDNAs with open reading frames for 300 previously undefined genes expressed in CD34+ hematopoietic stem/progenitor cells.</title>
        <authorList>
            <person name="Zhang Q.-H."/>
            <person name="Ye M."/>
            <person name="Wu X.-Y."/>
            <person name="Ren S.-X."/>
            <person name="Zhao M."/>
            <person name="Zhao C.-J."/>
            <person name="Fu G."/>
            <person name="Shen Y."/>
            <person name="Fan H.-Y."/>
            <person name="Lu G."/>
            <person name="Zhong M."/>
            <person name="Xu X.-R."/>
            <person name="Han Z.-G."/>
            <person name="Zhang J.-W."/>
            <person name="Tao J."/>
            <person name="Huang Q.-H."/>
            <person name="Zhou J."/>
            <person name="Hu G.-X."/>
            <person name="Gu J."/>
            <person name="Chen S.-J."/>
            <person name="Chen Z."/>
        </authorList>
    </citation>
    <scope>NUCLEOTIDE SEQUENCE [LARGE SCALE MRNA] (ISOFORM 1)</scope>
    <source>
        <tissue>Umbilical cord blood</tissue>
    </source>
</reference>
<reference key="5">
    <citation type="journal article" date="2004" name="Genome Res.">
        <title>The status, quality, and expansion of the NIH full-length cDNA project: the Mammalian Gene Collection (MGC).</title>
        <authorList>
            <consortium name="The MGC Project Team"/>
        </authorList>
    </citation>
    <scope>NUCLEOTIDE SEQUENCE [LARGE SCALE MRNA] (ISOFORMS 1 AND 2)</scope>
    <source>
        <tissue>Spinal cord</tissue>
        <tissue>Urinary bladder</tissue>
    </source>
</reference>
<reference key="6">
    <citation type="journal article" date="2005" name="Protein Expr. Purif.">
        <title>Identification, expression, and purification of a unique stable domain from human HSPC144 protein.</title>
        <authorList>
            <person name="Song A.X."/>
            <person name="Chang Y.G."/>
            <person name="Gao Y.G."/>
            <person name="Lin X.J."/>
            <person name="Shi Y.H."/>
            <person name="Lin D.H."/>
            <person name="Hang Q.H."/>
            <person name="Hu H.Y."/>
        </authorList>
    </citation>
    <scope>PURIFICATION</scope>
</reference>
<reference key="7">
    <citation type="journal article" date="2011" name="BMC Syst. Biol.">
        <title>Initial characterization of the human central proteome.</title>
        <authorList>
            <person name="Burkard T.R."/>
            <person name="Planyavsky M."/>
            <person name="Kaupe I."/>
            <person name="Breitwieser F.P."/>
            <person name="Buerckstuemmer T."/>
            <person name="Bennett K.L."/>
            <person name="Superti-Furga G."/>
            <person name="Colinge J."/>
        </authorList>
    </citation>
    <scope>IDENTIFICATION BY MASS SPECTROMETRY [LARGE SCALE ANALYSIS]</scope>
</reference>
<reference key="8">
    <citation type="journal article" date="2014" name="J. Proteomics">
        <title>An enzyme assisted RP-RPLC approach for in-depth analysis of human liver phosphoproteome.</title>
        <authorList>
            <person name="Bian Y."/>
            <person name="Song C."/>
            <person name="Cheng K."/>
            <person name="Dong M."/>
            <person name="Wang F."/>
            <person name="Huang J."/>
            <person name="Sun D."/>
            <person name="Wang L."/>
            <person name="Ye M."/>
            <person name="Zou H."/>
        </authorList>
    </citation>
    <scope>IDENTIFICATION BY MASS SPECTROMETRY [LARGE SCALE ANALYSIS]</scope>
    <source>
        <tissue>Liver</tissue>
    </source>
</reference>
<reference key="9">
    <citation type="journal article" date="2009" name="Acta Crystallogr. D">
        <title>Determining the DUF55-domain structure of human thymocyte nuclear protein 1 from crystals partially twinned by tetartohedry.</title>
        <authorList>
            <person name="Yu F."/>
            <person name="Song A."/>
            <person name="Xu C."/>
            <person name="Sun L."/>
            <person name="Li J."/>
            <person name="Tang L."/>
            <person name="Yu M."/>
            <person name="Yeates T.O."/>
            <person name="Hu H."/>
            <person name="He J."/>
        </authorList>
    </citation>
    <scope>X-RAY CRYSTALLOGRAPHY (2.3 ANGSTROMS) OF 55-221</scope>
</reference>
<organism>
    <name type="scientific">Homo sapiens</name>
    <name type="common">Human</name>
    <dbReference type="NCBI Taxonomy" id="9606"/>
    <lineage>
        <taxon>Eukaryota</taxon>
        <taxon>Metazoa</taxon>
        <taxon>Chordata</taxon>
        <taxon>Craniata</taxon>
        <taxon>Vertebrata</taxon>
        <taxon>Euteleostomi</taxon>
        <taxon>Mammalia</taxon>
        <taxon>Eutheria</taxon>
        <taxon>Euarchontoglires</taxon>
        <taxon>Primates</taxon>
        <taxon>Haplorrhini</taxon>
        <taxon>Catarrhini</taxon>
        <taxon>Hominidae</taxon>
        <taxon>Homo</taxon>
    </lineage>
</organism>
<keyword id="KW-0002">3D-structure</keyword>
<keyword id="KW-0025">Alternative splicing</keyword>
<keyword id="KW-0539">Nucleus</keyword>
<keyword id="KW-0597">Phosphoprotein</keyword>
<keyword id="KW-1267">Proteomics identification</keyword>
<keyword id="KW-1185">Reference proteome</keyword>
<comment type="function">
    <text evidence="1">Specifically binds 5-hydroxymethylcytosine (5hmC), suggesting that it acts as a specific reader of 5hmC.</text>
</comment>
<comment type="interaction">
    <interactant intactId="EBI-2795681">
        <id>Q9P016</id>
    </interactant>
    <interactant intactId="EBI-3938184">
        <id>Q9UHJ6</id>
        <label>SHPK</label>
    </interactant>
    <organismsDiffer>false</organismsDiffer>
    <experiments>2</experiments>
</comment>
<comment type="subcellular location">
    <subcellularLocation>
        <location evidence="1">Nucleus</location>
    </subcellularLocation>
</comment>
<comment type="alternative products">
    <event type="alternative splicing"/>
    <isoform>
        <id>Q9P016-1</id>
        <name>1</name>
        <sequence type="displayed"/>
    </isoform>
    <isoform>
        <id>Q9P016-2</id>
        <name>2</name>
        <sequence type="described" ref="VSP_021789"/>
    </isoform>
</comment>
<comment type="PTM">
    <text evidence="1">Phosphorylated.</text>
</comment>
<accession>Q9P016</accession>
<accession>Q567Q2</accession>
<accession>Q9H3L4</accession>
<accession>Q9HC20</accession>
<name>THYN1_HUMAN</name>
<feature type="chain" id="PRO_0000262564" description="Thymocyte nuclear protein 1">
    <location>
        <begin position="1"/>
        <end position="225"/>
    </location>
</feature>
<feature type="region of interest" description="Disordered" evidence="2">
    <location>
        <begin position="1"/>
        <end position="47"/>
    </location>
</feature>
<feature type="short sequence motif" description="Nuclear localization signal" evidence="1">
    <location>
        <begin position="5"/>
        <end position="10"/>
    </location>
</feature>
<feature type="compositionally biased region" description="Basic and acidic residues" evidence="2">
    <location>
        <begin position="23"/>
        <end position="39"/>
    </location>
</feature>
<feature type="splice variant" id="VSP_021789" description="In isoform 2." evidence="3 4">
    <original>VDVQFVRMMKRFIPLAELKSYHQAHKATGGPLKNMVLFTRQRLSIQPLTQEEFDFVLSLEEKEPS</original>
    <variation>KSLILF</variation>
    <location>
        <begin position="161"/>
        <end position="225"/>
    </location>
</feature>
<feature type="sequence conflict" description="In Ref. 5; AAH93074." evidence="5" ref="5">
    <original>G</original>
    <variation>V</variation>
    <location>
        <position position="29"/>
    </location>
</feature>
<feature type="sequence conflict" description="In Ref. 2; AAG43118." evidence="5" ref="2">
    <original>E</original>
    <variation>G</variation>
    <location>
        <position position="223"/>
    </location>
</feature>
<feature type="strand" evidence="6">
    <location>
        <begin position="56"/>
        <end position="64"/>
    </location>
</feature>
<feature type="strand" evidence="6">
    <location>
        <begin position="67"/>
        <end position="72"/>
    </location>
</feature>
<feature type="helix" evidence="6">
    <location>
        <begin position="78"/>
        <end position="81"/>
    </location>
</feature>
<feature type="helix" evidence="6">
    <location>
        <begin position="84"/>
        <end position="86"/>
    </location>
</feature>
<feature type="strand" evidence="6">
    <location>
        <begin position="87"/>
        <end position="89"/>
    </location>
</feature>
<feature type="helix" evidence="6">
    <location>
        <begin position="96"/>
        <end position="104"/>
    </location>
</feature>
<feature type="strand" evidence="6">
    <location>
        <begin position="110"/>
        <end position="115"/>
    </location>
</feature>
<feature type="strand" evidence="6">
    <location>
        <begin position="118"/>
        <end position="120"/>
    </location>
</feature>
<feature type="strand" evidence="6">
    <location>
        <begin position="122"/>
        <end position="135"/>
    </location>
</feature>
<feature type="helix" evidence="6">
    <location>
        <begin position="137"/>
        <end position="139"/>
    </location>
</feature>
<feature type="strand" evidence="6">
    <location>
        <begin position="159"/>
        <end position="174"/>
    </location>
</feature>
<feature type="helix" evidence="6">
    <location>
        <begin position="175"/>
        <end position="188"/>
    </location>
</feature>
<feature type="turn" evidence="7">
    <location>
        <begin position="191"/>
        <end position="194"/>
    </location>
</feature>
<feature type="helix" evidence="6">
    <location>
        <begin position="196"/>
        <end position="199"/>
    </location>
</feature>
<feature type="strand" evidence="6">
    <location>
        <begin position="204"/>
        <end position="208"/>
    </location>
</feature>
<feature type="helix" evidence="6">
    <location>
        <begin position="210"/>
        <end position="218"/>
    </location>
</feature>
<feature type="helix" evidence="6">
    <location>
        <begin position="219"/>
        <end position="221"/>
    </location>
</feature>
<sequence length="225" mass="25697">MSRPRKRLAGTSGSDKGLSGKRTKTENSGEALAKVEDSNPQKTSATKNCLKNLSSHWLMKSEPESRLEKGVDVKFSIEDLKAQPKQTTCWDGVRNYQARNFLRAMKLGEEAFFYHSNCKEPGIAGLMKIVKEAYPDHTQFEKNNPHYDPSSKEDNPKWSMVDVQFVRMMKRFIPLAELKSYHQAHKATGGPLKNMVLFTRQRLSIQPLTQEEFDFVLSLEEKEPS</sequence>
<evidence type="ECO:0000250" key="1"/>
<evidence type="ECO:0000256" key="2">
    <source>
        <dbReference type="SAM" id="MobiDB-lite"/>
    </source>
</evidence>
<evidence type="ECO:0000303" key="3">
    <source>
    </source>
</evidence>
<evidence type="ECO:0000303" key="4">
    <source ref="3"/>
</evidence>
<evidence type="ECO:0000305" key="5"/>
<evidence type="ECO:0007829" key="6">
    <source>
        <dbReference type="PDB" id="3EOP"/>
    </source>
</evidence>
<evidence type="ECO:0007829" key="7">
    <source>
        <dbReference type="PDB" id="5J3E"/>
    </source>
</evidence>
<protein>
    <recommendedName>
        <fullName>Thymocyte nuclear protein 1</fullName>
    </recommendedName>
    <alternativeName>
        <fullName>Thymocyte protein Thy28</fullName>
    </alternativeName>
</protein>
<gene>
    <name type="primary">THYN1</name>
    <name type="synonym">THY28</name>
    <name type="ORF">HSPC144</name>
    <name type="ORF">MDS012</name>
    <name type="ORF">My0054</name>
</gene>
<dbReference type="EMBL" id="AF087886">
    <property type="protein sequence ID" value="AAP97185.1"/>
    <property type="molecule type" value="mRNA"/>
</dbReference>
<dbReference type="EMBL" id="AF059619">
    <property type="protein sequence ID" value="AAG43118.1"/>
    <property type="molecule type" value="mRNA"/>
</dbReference>
<dbReference type="EMBL" id="AF182413">
    <property type="protein sequence ID" value="AAG14949.1"/>
    <property type="molecule type" value="mRNA"/>
</dbReference>
<dbReference type="EMBL" id="AF161493">
    <property type="protein sequence ID" value="AAF29108.1"/>
    <property type="molecule type" value="mRNA"/>
</dbReference>
<dbReference type="EMBL" id="BC006978">
    <property type="protein sequence ID" value="AAH06978.1"/>
    <property type="molecule type" value="mRNA"/>
</dbReference>
<dbReference type="EMBL" id="BC093074">
    <property type="protein sequence ID" value="AAH93074.1"/>
    <property type="molecule type" value="mRNA"/>
</dbReference>
<dbReference type="CCDS" id="CCDS8496.1">
    <molecule id="Q9P016-1"/>
</dbReference>
<dbReference type="CCDS" id="CCDS8497.1">
    <molecule id="Q9P016-2"/>
</dbReference>
<dbReference type="RefSeq" id="NP_001032381.1">
    <molecule id="Q9P016-2"/>
    <property type="nucleotide sequence ID" value="NM_001037304.2"/>
</dbReference>
<dbReference type="RefSeq" id="NP_001032382.1">
    <molecule id="Q9P016-1"/>
    <property type="nucleotide sequence ID" value="NM_001037305.2"/>
</dbReference>
<dbReference type="RefSeq" id="NP_054893.1">
    <molecule id="Q9P016-1"/>
    <property type="nucleotide sequence ID" value="NM_014174.3"/>
</dbReference>
<dbReference type="RefSeq" id="NP_954994.1">
    <molecule id="Q9P016-2"/>
    <property type="nucleotide sequence ID" value="NM_199297.2"/>
</dbReference>
<dbReference type="RefSeq" id="NP_954995.1">
    <molecule id="Q9P016-1"/>
    <property type="nucleotide sequence ID" value="NM_199298.2"/>
</dbReference>
<dbReference type="PDB" id="3EOP">
    <property type="method" value="X-ray"/>
    <property type="resolution" value="2.30 A"/>
    <property type="chains" value="A/B=55-221"/>
</dbReference>
<dbReference type="PDB" id="5J3E">
    <property type="method" value="X-ray"/>
    <property type="resolution" value="2.60 A"/>
    <property type="chains" value="A/B=1-225"/>
</dbReference>
<dbReference type="PDBsum" id="3EOP"/>
<dbReference type="PDBsum" id="5J3E"/>
<dbReference type="BMRB" id="Q9P016"/>
<dbReference type="SMR" id="Q9P016"/>
<dbReference type="BioGRID" id="118856">
    <property type="interactions" value="40"/>
</dbReference>
<dbReference type="FunCoup" id="Q9P016">
    <property type="interactions" value="1771"/>
</dbReference>
<dbReference type="IntAct" id="Q9P016">
    <property type="interactions" value="11"/>
</dbReference>
<dbReference type="MINT" id="Q9P016"/>
<dbReference type="STRING" id="9606.ENSP00000341657"/>
<dbReference type="GlyCosmos" id="Q9P016">
    <property type="glycosylation" value="1 site, 2 glycans"/>
</dbReference>
<dbReference type="GlyGen" id="Q9P016">
    <property type="glycosylation" value="1 site, 2 O-linked glycans (1 site)"/>
</dbReference>
<dbReference type="iPTMnet" id="Q9P016"/>
<dbReference type="PhosphoSitePlus" id="Q9P016"/>
<dbReference type="SwissPalm" id="Q9P016"/>
<dbReference type="BioMuta" id="THYN1"/>
<dbReference type="DMDM" id="74734762"/>
<dbReference type="jPOST" id="Q9P016"/>
<dbReference type="MassIVE" id="Q9P016"/>
<dbReference type="PaxDb" id="9606-ENSP00000341657"/>
<dbReference type="PeptideAtlas" id="Q9P016"/>
<dbReference type="ProteomicsDB" id="83534">
    <molecule id="Q9P016-1"/>
</dbReference>
<dbReference type="ProteomicsDB" id="83535">
    <molecule id="Q9P016-2"/>
</dbReference>
<dbReference type="Pumba" id="Q9P016"/>
<dbReference type="Antibodypedia" id="33170">
    <property type="antibodies" value="157 antibodies from 25 providers"/>
</dbReference>
<dbReference type="DNASU" id="29087"/>
<dbReference type="Ensembl" id="ENST00000341541.8">
    <molecule id="Q9P016-1"/>
    <property type="protein sequence ID" value="ENSP00000341657.3"/>
    <property type="gene ID" value="ENSG00000151500.15"/>
</dbReference>
<dbReference type="Ensembl" id="ENST00000352327.5">
    <molecule id="Q9P016-2"/>
    <property type="protein sequence ID" value="ENSP00000341452.5"/>
    <property type="gene ID" value="ENSG00000151500.15"/>
</dbReference>
<dbReference type="Ensembl" id="ENST00000392594.7">
    <molecule id="Q9P016-1"/>
    <property type="protein sequence ID" value="ENSP00000376373.3"/>
    <property type="gene ID" value="ENSG00000151500.15"/>
</dbReference>
<dbReference type="Ensembl" id="ENST00000392595.6">
    <molecule id="Q9P016-1"/>
    <property type="protein sequence ID" value="ENSP00000376374.2"/>
    <property type="gene ID" value="ENSG00000151500.15"/>
</dbReference>
<dbReference type="GeneID" id="29087"/>
<dbReference type="KEGG" id="hsa:29087"/>
<dbReference type="MANE-Select" id="ENST00000341541.8">
    <property type="protein sequence ID" value="ENSP00000341657.3"/>
    <property type="RefSeq nucleotide sequence ID" value="NM_014174.3"/>
    <property type="RefSeq protein sequence ID" value="NP_054893.1"/>
</dbReference>
<dbReference type="UCSC" id="uc001qhf.4">
    <molecule id="Q9P016-1"/>
    <property type="organism name" value="human"/>
</dbReference>
<dbReference type="AGR" id="HGNC:29560"/>
<dbReference type="CTD" id="29087"/>
<dbReference type="DisGeNET" id="29087"/>
<dbReference type="GeneCards" id="THYN1"/>
<dbReference type="HGNC" id="HGNC:29560">
    <property type="gene designation" value="THYN1"/>
</dbReference>
<dbReference type="HPA" id="ENSG00000151500">
    <property type="expression patterns" value="Low tissue specificity"/>
</dbReference>
<dbReference type="MIM" id="613739">
    <property type="type" value="gene"/>
</dbReference>
<dbReference type="neXtProt" id="NX_Q9P016"/>
<dbReference type="OpenTargets" id="ENSG00000151500"/>
<dbReference type="PharmGKB" id="PA128394653"/>
<dbReference type="VEuPathDB" id="HostDB:ENSG00000151500"/>
<dbReference type="eggNOG" id="KOG3383">
    <property type="taxonomic scope" value="Eukaryota"/>
</dbReference>
<dbReference type="GeneTree" id="ENSGT00390000013297"/>
<dbReference type="HOGENOM" id="CLU_041799_2_0_1"/>
<dbReference type="InParanoid" id="Q9P016"/>
<dbReference type="OMA" id="DVQFIRM"/>
<dbReference type="OrthoDB" id="41445at2759"/>
<dbReference type="PAN-GO" id="Q9P016">
    <property type="GO annotations" value="1 GO annotation based on evolutionary models"/>
</dbReference>
<dbReference type="PhylomeDB" id="Q9P016"/>
<dbReference type="TreeFam" id="TF332126"/>
<dbReference type="PathwayCommons" id="Q9P016"/>
<dbReference type="SignaLink" id="Q9P016"/>
<dbReference type="BioGRID-ORCS" id="29087">
    <property type="hits" value="8 hits in 1155 CRISPR screens"/>
</dbReference>
<dbReference type="CD-CODE" id="91857CE7">
    <property type="entry name" value="Nucleolus"/>
</dbReference>
<dbReference type="ChiTaRS" id="THYN1">
    <property type="organism name" value="human"/>
</dbReference>
<dbReference type="EvolutionaryTrace" id="Q9P016"/>
<dbReference type="GeneWiki" id="THYN1"/>
<dbReference type="GenomeRNAi" id="29087"/>
<dbReference type="Pharos" id="Q9P016">
    <property type="development level" value="Tbio"/>
</dbReference>
<dbReference type="PRO" id="PR:Q9P016"/>
<dbReference type="Proteomes" id="UP000005640">
    <property type="component" value="Chromosome 11"/>
</dbReference>
<dbReference type="RNAct" id="Q9P016">
    <property type="molecule type" value="protein"/>
</dbReference>
<dbReference type="Bgee" id="ENSG00000151500">
    <property type="expression patterns" value="Expressed in oocyte and 210 other cell types or tissues"/>
</dbReference>
<dbReference type="ExpressionAtlas" id="Q9P016">
    <property type="expression patterns" value="baseline and differential"/>
</dbReference>
<dbReference type="GO" id="GO:0005634">
    <property type="term" value="C:nucleus"/>
    <property type="evidence" value="ECO:0007005"/>
    <property type="project" value="UniProtKB"/>
</dbReference>
<dbReference type="CDD" id="cd21133">
    <property type="entry name" value="EVE"/>
    <property type="match status" value="1"/>
</dbReference>
<dbReference type="FunFam" id="3.10.590.10:FF:000003">
    <property type="entry name" value="Thymocyte nuclear protein 1"/>
    <property type="match status" value="1"/>
</dbReference>
<dbReference type="Gene3D" id="3.10.590.10">
    <property type="entry name" value="ph1033 like domains"/>
    <property type="match status" value="1"/>
</dbReference>
<dbReference type="InterPro" id="IPR052181">
    <property type="entry name" value="5hmC_binding"/>
</dbReference>
<dbReference type="InterPro" id="IPR002740">
    <property type="entry name" value="EVE_domain"/>
</dbReference>
<dbReference type="InterPro" id="IPR015947">
    <property type="entry name" value="PUA-like_sf"/>
</dbReference>
<dbReference type="InterPro" id="IPR047197">
    <property type="entry name" value="THYN1-like_EVE"/>
</dbReference>
<dbReference type="PANTHER" id="PTHR14087">
    <property type="entry name" value="THYMOCYTE NUCLEAR PROTEIN 1"/>
    <property type="match status" value="1"/>
</dbReference>
<dbReference type="PANTHER" id="PTHR14087:SF7">
    <property type="entry name" value="THYMOCYTE NUCLEAR PROTEIN 1"/>
    <property type="match status" value="1"/>
</dbReference>
<dbReference type="Pfam" id="PF01878">
    <property type="entry name" value="EVE"/>
    <property type="match status" value="1"/>
</dbReference>
<dbReference type="SUPFAM" id="SSF88697">
    <property type="entry name" value="PUA domain-like"/>
    <property type="match status" value="1"/>
</dbReference>
<proteinExistence type="evidence at protein level"/>